<reference key="1">
    <citation type="journal article" date="2000" name="Proc. Natl. Acad. Sci. U.S.A.">
        <title>Archaeal adaptation to higher temperatures revealed by genomic sequence of Thermoplasma volcanium.</title>
        <authorList>
            <person name="Kawashima T."/>
            <person name="Amano N."/>
            <person name="Koike H."/>
            <person name="Makino S."/>
            <person name="Higuchi S."/>
            <person name="Kawashima-Ohya Y."/>
            <person name="Watanabe K."/>
            <person name="Yamazaki M."/>
            <person name="Kanehori K."/>
            <person name="Kawamoto T."/>
            <person name="Nunoshiba T."/>
            <person name="Yamamoto Y."/>
            <person name="Aramaki H."/>
            <person name="Makino K."/>
            <person name="Suzuki M."/>
        </authorList>
    </citation>
    <scope>NUCLEOTIDE SEQUENCE [LARGE SCALE GENOMIC DNA]</scope>
    <source>
        <strain>ATCC 51530 / DSM 4299 / JCM 9571 / NBRC 15438 / GSS1</strain>
    </source>
</reference>
<gene>
    <name type="primary">rpl37e</name>
    <name type="ordered locus">TV0359</name>
    <name type="ORF">TVG0350173</name>
</gene>
<evidence type="ECO:0000250" key="1"/>
<evidence type="ECO:0000255" key="2"/>
<evidence type="ECO:0000305" key="3"/>
<name>RL37_THEVO</name>
<proteinExistence type="inferred from homology"/>
<feature type="chain" id="PRO_0000139742" description="Large ribosomal subunit protein eL37">
    <location>
        <begin position="1"/>
        <end position="54"/>
    </location>
</feature>
<feature type="zinc finger region" description="C4-type" evidence="2">
    <location>
        <begin position="20"/>
        <end position="38"/>
    </location>
</feature>
<feature type="binding site" evidence="1">
    <location>
        <position position="20"/>
    </location>
    <ligand>
        <name>Zn(2+)</name>
        <dbReference type="ChEBI" id="CHEBI:29105"/>
    </ligand>
</feature>
<feature type="binding site" evidence="1">
    <location>
        <position position="23"/>
    </location>
    <ligand>
        <name>Zn(2+)</name>
        <dbReference type="ChEBI" id="CHEBI:29105"/>
    </ligand>
</feature>
<feature type="binding site" evidence="1">
    <location>
        <position position="35"/>
    </location>
    <ligand>
        <name>Zn(2+)</name>
        <dbReference type="ChEBI" id="CHEBI:29105"/>
    </ligand>
</feature>
<feature type="binding site" evidence="1">
    <location>
        <position position="38"/>
    </location>
    <ligand>
        <name>Zn(2+)</name>
        <dbReference type="ChEBI" id="CHEBI:29105"/>
    </ligand>
</feature>
<comment type="function">
    <text evidence="1">Binds to the 23S rRNA.</text>
</comment>
<comment type="cofactor">
    <cofactor evidence="1">
        <name>Zn(2+)</name>
        <dbReference type="ChEBI" id="CHEBI:29105"/>
    </cofactor>
    <text evidence="1">Binds 1 zinc ion per subunit.</text>
</comment>
<comment type="similarity">
    <text evidence="3">Belongs to the eukaryotic ribosomal protein eL37 family.</text>
</comment>
<keyword id="KW-0479">Metal-binding</keyword>
<keyword id="KW-0687">Ribonucleoprotein</keyword>
<keyword id="KW-0689">Ribosomal protein</keyword>
<keyword id="KW-0694">RNA-binding</keyword>
<keyword id="KW-0699">rRNA-binding</keyword>
<keyword id="KW-0862">Zinc</keyword>
<keyword id="KW-0863">Zinc-finger</keyword>
<sequence>MSNGTAVMGKINNKKTHITCRRCGHHTYNVRTKRCSHCGFPAPRIRSYKWAKAK</sequence>
<dbReference type="EMBL" id="BA000011">
    <property type="protein sequence ID" value="BAB59501.1"/>
    <property type="molecule type" value="Genomic_DNA"/>
</dbReference>
<dbReference type="RefSeq" id="WP_010916613.1">
    <property type="nucleotide sequence ID" value="NC_002689.2"/>
</dbReference>
<dbReference type="SMR" id="Q97BU6"/>
<dbReference type="STRING" id="273116.gene:9381136"/>
<dbReference type="PaxDb" id="273116-14324574"/>
<dbReference type="GeneID" id="32154008"/>
<dbReference type="KEGG" id="tvo:TVG0350173"/>
<dbReference type="eggNOG" id="arCOG04126">
    <property type="taxonomic scope" value="Archaea"/>
</dbReference>
<dbReference type="HOGENOM" id="CLU_208825_0_0_2"/>
<dbReference type="OrthoDB" id="5619at2157"/>
<dbReference type="PhylomeDB" id="Q97BU6"/>
<dbReference type="Proteomes" id="UP000001017">
    <property type="component" value="Chromosome"/>
</dbReference>
<dbReference type="GO" id="GO:0022625">
    <property type="term" value="C:cytosolic large ribosomal subunit"/>
    <property type="evidence" value="ECO:0007669"/>
    <property type="project" value="TreeGrafter"/>
</dbReference>
<dbReference type="GO" id="GO:0019843">
    <property type="term" value="F:rRNA binding"/>
    <property type="evidence" value="ECO:0007669"/>
    <property type="project" value="UniProtKB-KW"/>
</dbReference>
<dbReference type="GO" id="GO:0003735">
    <property type="term" value="F:structural constituent of ribosome"/>
    <property type="evidence" value="ECO:0007669"/>
    <property type="project" value="InterPro"/>
</dbReference>
<dbReference type="GO" id="GO:0008270">
    <property type="term" value="F:zinc ion binding"/>
    <property type="evidence" value="ECO:0007669"/>
    <property type="project" value="UniProtKB-UniRule"/>
</dbReference>
<dbReference type="GO" id="GO:0006412">
    <property type="term" value="P:translation"/>
    <property type="evidence" value="ECO:0007669"/>
    <property type="project" value="UniProtKB-UniRule"/>
</dbReference>
<dbReference type="Gene3D" id="2.20.25.30">
    <property type="match status" value="1"/>
</dbReference>
<dbReference type="HAMAP" id="MF_00547">
    <property type="entry name" value="Ribosomal_eL37"/>
    <property type="match status" value="1"/>
</dbReference>
<dbReference type="InterPro" id="IPR001569">
    <property type="entry name" value="Ribosomal_eL37"/>
</dbReference>
<dbReference type="InterPro" id="IPR011331">
    <property type="entry name" value="Ribosomal_eL37/eL43"/>
</dbReference>
<dbReference type="InterPro" id="IPR018267">
    <property type="entry name" value="Ribosomal_eL37_CS"/>
</dbReference>
<dbReference type="InterPro" id="IPR011332">
    <property type="entry name" value="Ribosomal_zn-bd"/>
</dbReference>
<dbReference type="NCBIfam" id="NF003214">
    <property type="entry name" value="PRK04179.1"/>
    <property type="match status" value="1"/>
</dbReference>
<dbReference type="PANTHER" id="PTHR10768">
    <property type="entry name" value="60S RIBOSOMAL PROTEIN L37"/>
    <property type="match status" value="1"/>
</dbReference>
<dbReference type="PANTHER" id="PTHR10768:SF0">
    <property type="entry name" value="RIBOSOMAL PROTEIN L37"/>
    <property type="match status" value="1"/>
</dbReference>
<dbReference type="Pfam" id="PF01907">
    <property type="entry name" value="Ribosomal_L37e"/>
    <property type="match status" value="1"/>
</dbReference>
<dbReference type="SUPFAM" id="SSF57829">
    <property type="entry name" value="Zn-binding ribosomal proteins"/>
    <property type="match status" value="1"/>
</dbReference>
<dbReference type="PROSITE" id="PS01077">
    <property type="entry name" value="RIBOSOMAL_L37E"/>
    <property type="match status" value="1"/>
</dbReference>
<protein>
    <recommendedName>
        <fullName evidence="3">Large ribosomal subunit protein eL37</fullName>
    </recommendedName>
    <alternativeName>
        <fullName>50S ribosomal protein L37e</fullName>
    </alternativeName>
</protein>
<organism>
    <name type="scientific">Thermoplasma volcanium (strain ATCC 51530 / DSM 4299 / JCM 9571 / NBRC 15438 / GSS1)</name>
    <dbReference type="NCBI Taxonomy" id="273116"/>
    <lineage>
        <taxon>Archaea</taxon>
        <taxon>Methanobacteriati</taxon>
        <taxon>Thermoplasmatota</taxon>
        <taxon>Thermoplasmata</taxon>
        <taxon>Thermoplasmatales</taxon>
        <taxon>Thermoplasmataceae</taxon>
        <taxon>Thermoplasma</taxon>
    </lineage>
</organism>
<accession>Q97BU6</accession>